<accession>Q98PF2</accession>
<organism>
    <name type="scientific">Mycoplasmopsis pulmonis (strain UAB CTIP)</name>
    <name type="common">Mycoplasma pulmonis</name>
    <dbReference type="NCBI Taxonomy" id="272635"/>
    <lineage>
        <taxon>Bacteria</taxon>
        <taxon>Bacillati</taxon>
        <taxon>Mycoplasmatota</taxon>
        <taxon>Mycoplasmoidales</taxon>
        <taxon>Metamycoplasmataceae</taxon>
        <taxon>Mycoplasmopsis</taxon>
    </lineage>
</organism>
<keyword id="KW-0030">Aminoacyl-tRNA synthetase</keyword>
<keyword id="KW-0067">ATP-binding</keyword>
<keyword id="KW-0963">Cytoplasm</keyword>
<keyword id="KW-0436">Ligase</keyword>
<keyword id="KW-0547">Nucleotide-binding</keyword>
<keyword id="KW-0648">Protein biosynthesis</keyword>
<keyword id="KW-1185">Reference proteome</keyword>
<gene>
    <name evidence="1" type="primary">asnS</name>
    <name type="ordered locus">MYPU_7710</name>
</gene>
<evidence type="ECO:0000255" key="1">
    <source>
        <dbReference type="HAMAP-Rule" id="MF_00534"/>
    </source>
</evidence>
<reference key="1">
    <citation type="journal article" date="2001" name="Nucleic Acids Res.">
        <title>The complete genome sequence of the murine respiratory pathogen Mycoplasma pulmonis.</title>
        <authorList>
            <person name="Chambaud I."/>
            <person name="Heilig R."/>
            <person name="Ferris S."/>
            <person name="Barbe V."/>
            <person name="Samson D."/>
            <person name="Galisson F."/>
            <person name="Moszer I."/>
            <person name="Dybvig K."/>
            <person name="Wroblewski H."/>
            <person name="Viari A."/>
            <person name="Rocha E.P.C."/>
            <person name="Blanchard A."/>
        </authorList>
    </citation>
    <scope>NUCLEOTIDE SEQUENCE [LARGE SCALE GENOMIC DNA]</scope>
    <source>
        <strain>UAB CTIP</strain>
    </source>
</reference>
<name>SYN_MYCPU</name>
<feature type="chain" id="PRO_0000176434" description="Asparagine--tRNA ligase">
    <location>
        <begin position="1"/>
        <end position="450"/>
    </location>
</feature>
<sequence>MKMLVKQIYENAKELDKSKIKIKGWVVTSRGNKKIQFIELNDGSSVLHLQLVLKSEKMDLNDIHFKTGSSIKAEGILNYTPKAEQSVELIVDKISLLAQSDEDFPIQTKKTTLEFLRTIPHLRHRSNTIKAVMLVRSSISFFIHEYFQKNDFSLVAAPIITSNDGEGAGETFIVDSEDKEPFFGNNVKATLGVTGQLHAEAYALGLQKVYTFAPTFRAENSNTKKHAAEFWMVEPEVAFFTLKELIQMSEEMLKYVIKKVLEKRRDELVFLDTHIKPGLIQSLEDFLESNLEIIEYRKVIEILEKNKVFFEEQNIEFGMDLKTEHERFIAEKYAKGPVGVINYPKKLKAFYMYQNDDNETVAAFDLLVPGIGELVGGSQRENRYEKLEQRIQELNIDQKDIQWYLDLRKYGYSGSAGFGLGLERLVMYITGIDNIRDSIPFPRTPNNLKM</sequence>
<comment type="catalytic activity">
    <reaction evidence="1">
        <text>tRNA(Asn) + L-asparagine + ATP = L-asparaginyl-tRNA(Asn) + AMP + diphosphate + H(+)</text>
        <dbReference type="Rhea" id="RHEA:11180"/>
        <dbReference type="Rhea" id="RHEA-COMP:9659"/>
        <dbReference type="Rhea" id="RHEA-COMP:9674"/>
        <dbReference type="ChEBI" id="CHEBI:15378"/>
        <dbReference type="ChEBI" id="CHEBI:30616"/>
        <dbReference type="ChEBI" id="CHEBI:33019"/>
        <dbReference type="ChEBI" id="CHEBI:58048"/>
        <dbReference type="ChEBI" id="CHEBI:78442"/>
        <dbReference type="ChEBI" id="CHEBI:78515"/>
        <dbReference type="ChEBI" id="CHEBI:456215"/>
        <dbReference type="EC" id="6.1.1.22"/>
    </reaction>
</comment>
<comment type="subunit">
    <text evidence="1">Homodimer.</text>
</comment>
<comment type="subcellular location">
    <subcellularLocation>
        <location evidence="1">Cytoplasm</location>
    </subcellularLocation>
</comment>
<comment type="similarity">
    <text evidence="1">Belongs to the class-II aminoacyl-tRNA synthetase family.</text>
</comment>
<proteinExistence type="inferred from homology"/>
<protein>
    <recommendedName>
        <fullName evidence="1">Asparagine--tRNA ligase</fullName>
        <ecNumber evidence="1">6.1.1.22</ecNumber>
    </recommendedName>
    <alternativeName>
        <fullName evidence="1">Asparaginyl-tRNA synthetase</fullName>
        <shortName evidence="1">AsnRS</shortName>
    </alternativeName>
</protein>
<dbReference type="EC" id="6.1.1.22" evidence="1"/>
<dbReference type="EMBL" id="AL445565">
    <property type="protein sequence ID" value="CAC13944.1"/>
    <property type="molecule type" value="Genomic_DNA"/>
</dbReference>
<dbReference type="PIR" id="C90608">
    <property type="entry name" value="C90608"/>
</dbReference>
<dbReference type="SMR" id="Q98PF2"/>
<dbReference type="STRING" id="272635.gene:17577382"/>
<dbReference type="KEGG" id="mpu:MYPU_7710"/>
<dbReference type="eggNOG" id="COG0017">
    <property type="taxonomic scope" value="Bacteria"/>
</dbReference>
<dbReference type="HOGENOM" id="CLU_004553_2_0_14"/>
<dbReference type="Proteomes" id="UP000000528">
    <property type="component" value="Chromosome"/>
</dbReference>
<dbReference type="GO" id="GO:0005737">
    <property type="term" value="C:cytoplasm"/>
    <property type="evidence" value="ECO:0007669"/>
    <property type="project" value="UniProtKB-SubCell"/>
</dbReference>
<dbReference type="GO" id="GO:0004816">
    <property type="term" value="F:asparagine-tRNA ligase activity"/>
    <property type="evidence" value="ECO:0007669"/>
    <property type="project" value="UniProtKB-UniRule"/>
</dbReference>
<dbReference type="GO" id="GO:0005524">
    <property type="term" value="F:ATP binding"/>
    <property type="evidence" value="ECO:0007669"/>
    <property type="project" value="UniProtKB-UniRule"/>
</dbReference>
<dbReference type="GO" id="GO:0003676">
    <property type="term" value="F:nucleic acid binding"/>
    <property type="evidence" value="ECO:0007669"/>
    <property type="project" value="InterPro"/>
</dbReference>
<dbReference type="GO" id="GO:0006421">
    <property type="term" value="P:asparaginyl-tRNA aminoacylation"/>
    <property type="evidence" value="ECO:0007669"/>
    <property type="project" value="UniProtKB-UniRule"/>
</dbReference>
<dbReference type="CDD" id="cd00776">
    <property type="entry name" value="AsxRS_core"/>
    <property type="match status" value="1"/>
</dbReference>
<dbReference type="CDD" id="cd04318">
    <property type="entry name" value="EcAsnRS_like_N"/>
    <property type="match status" value="1"/>
</dbReference>
<dbReference type="FunFam" id="3.30.930.10:FF:000016">
    <property type="entry name" value="Asparagine--tRNA ligase"/>
    <property type="match status" value="1"/>
</dbReference>
<dbReference type="Gene3D" id="3.30.930.10">
    <property type="entry name" value="Bira Bifunctional Protein, Domain 2"/>
    <property type="match status" value="1"/>
</dbReference>
<dbReference type="Gene3D" id="2.40.50.140">
    <property type="entry name" value="Nucleic acid-binding proteins"/>
    <property type="match status" value="1"/>
</dbReference>
<dbReference type="HAMAP" id="MF_00534">
    <property type="entry name" value="Asn_tRNA_synth"/>
    <property type="match status" value="1"/>
</dbReference>
<dbReference type="InterPro" id="IPR004364">
    <property type="entry name" value="Aa-tRNA-synt_II"/>
</dbReference>
<dbReference type="InterPro" id="IPR006195">
    <property type="entry name" value="aa-tRNA-synth_II"/>
</dbReference>
<dbReference type="InterPro" id="IPR045864">
    <property type="entry name" value="aa-tRNA-synth_II/BPL/LPL"/>
</dbReference>
<dbReference type="InterPro" id="IPR004522">
    <property type="entry name" value="Asn-tRNA-ligase"/>
</dbReference>
<dbReference type="InterPro" id="IPR002312">
    <property type="entry name" value="Asp/Asn-tRNA-synth_IIb"/>
</dbReference>
<dbReference type="InterPro" id="IPR012340">
    <property type="entry name" value="NA-bd_OB-fold"/>
</dbReference>
<dbReference type="InterPro" id="IPR004365">
    <property type="entry name" value="NA-bd_OB_tRNA"/>
</dbReference>
<dbReference type="NCBIfam" id="TIGR00457">
    <property type="entry name" value="asnS"/>
    <property type="match status" value="1"/>
</dbReference>
<dbReference type="NCBIfam" id="NF003037">
    <property type="entry name" value="PRK03932.1"/>
    <property type="match status" value="1"/>
</dbReference>
<dbReference type="PANTHER" id="PTHR22594:SF34">
    <property type="entry name" value="ASPARAGINE--TRNA LIGASE, MITOCHONDRIAL-RELATED"/>
    <property type="match status" value="1"/>
</dbReference>
<dbReference type="PANTHER" id="PTHR22594">
    <property type="entry name" value="ASPARTYL/LYSYL-TRNA SYNTHETASE"/>
    <property type="match status" value="1"/>
</dbReference>
<dbReference type="Pfam" id="PF00152">
    <property type="entry name" value="tRNA-synt_2"/>
    <property type="match status" value="1"/>
</dbReference>
<dbReference type="Pfam" id="PF01336">
    <property type="entry name" value="tRNA_anti-codon"/>
    <property type="match status" value="1"/>
</dbReference>
<dbReference type="PRINTS" id="PR01042">
    <property type="entry name" value="TRNASYNTHASP"/>
</dbReference>
<dbReference type="SUPFAM" id="SSF55681">
    <property type="entry name" value="Class II aaRS and biotin synthetases"/>
    <property type="match status" value="1"/>
</dbReference>
<dbReference type="SUPFAM" id="SSF50249">
    <property type="entry name" value="Nucleic acid-binding proteins"/>
    <property type="match status" value="1"/>
</dbReference>
<dbReference type="PROSITE" id="PS50862">
    <property type="entry name" value="AA_TRNA_LIGASE_II"/>
    <property type="match status" value="1"/>
</dbReference>